<evidence type="ECO:0000255" key="1">
    <source>
        <dbReference type="HAMAP-Rule" id="MF_01849"/>
    </source>
</evidence>
<evidence type="ECO:0000255" key="2">
    <source>
        <dbReference type="PROSITE-ProRule" id="PRU01266"/>
    </source>
</evidence>
<accession>A1VAL8</accession>
<proteinExistence type="inferred from homology"/>
<dbReference type="EC" id="2.1.1.192" evidence="1"/>
<dbReference type="EMBL" id="CP000527">
    <property type="protein sequence ID" value="ABM27484.1"/>
    <property type="molecule type" value="Genomic_DNA"/>
</dbReference>
<dbReference type="RefSeq" id="WP_011791622.1">
    <property type="nucleotide sequence ID" value="NC_008751.1"/>
</dbReference>
<dbReference type="SMR" id="A1VAL8"/>
<dbReference type="KEGG" id="dvl:Dvul_0461"/>
<dbReference type="HOGENOM" id="CLU_029101_2_0_7"/>
<dbReference type="Proteomes" id="UP000009173">
    <property type="component" value="Chromosome"/>
</dbReference>
<dbReference type="GO" id="GO:0005737">
    <property type="term" value="C:cytoplasm"/>
    <property type="evidence" value="ECO:0007669"/>
    <property type="project" value="UniProtKB-SubCell"/>
</dbReference>
<dbReference type="GO" id="GO:0051539">
    <property type="term" value="F:4 iron, 4 sulfur cluster binding"/>
    <property type="evidence" value="ECO:0007669"/>
    <property type="project" value="UniProtKB-UniRule"/>
</dbReference>
<dbReference type="GO" id="GO:0046872">
    <property type="term" value="F:metal ion binding"/>
    <property type="evidence" value="ECO:0007669"/>
    <property type="project" value="UniProtKB-KW"/>
</dbReference>
<dbReference type="GO" id="GO:0070040">
    <property type="term" value="F:rRNA (adenine(2503)-C2-)-methyltransferase activity"/>
    <property type="evidence" value="ECO:0007669"/>
    <property type="project" value="UniProtKB-UniRule"/>
</dbReference>
<dbReference type="GO" id="GO:0019843">
    <property type="term" value="F:rRNA binding"/>
    <property type="evidence" value="ECO:0007669"/>
    <property type="project" value="UniProtKB-UniRule"/>
</dbReference>
<dbReference type="GO" id="GO:0002935">
    <property type="term" value="F:tRNA (adenine(37)-C2)-methyltransferase activity"/>
    <property type="evidence" value="ECO:0007669"/>
    <property type="project" value="UniProtKB-UniRule"/>
</dbReference>
<dbReference type="GO" id="GO:0000049">
    <property type="term" value="F:tRNA binding"/>
    <property type="evidence" value="ECO:0007669"/>
    <property type="project" value="UniProtKB-UniRule"/>
</dbReference>
<dbReference type="GO" id="GO:0070475">
    <property type="term" value="P:rRNA base methylation"/>
    <property type="evidence" value="ECO:0007669"/>
    <property type="project" value="UniProtKB-UniRule"/>
</dbReference>
<dbReference type="GO" id="GO:0030488">
    <property type="term" value="P:tRNA methylation"/>
    <property type="evidence" value="ECO:0007669"/>
    <property type="project" value="UniProtKB-UniRule"/>
</dbReference>
<dbReference type="CDD" id="cd01335">
    <property type="entry name" value="Radical_SAM"/>
    <property type="match status" value="1"/>
</dbReference>
<dbReference type="FunFam" id="3.20.20.70:FF:000014">
    <property type="entry name" value="Probable dual-specificity RNA methyltransferase RlmN"/>
    <property type="match status" value="1"/>
</dbReference>
<dbReference type="Gene3D" id="1.10.150.530">
    <property type="match status" value="1"/>
</dbReference>
<dbReference type="Gene3D" id="3.20.20.70">
    <property type="entry name" value="Aldolase class I"/>
    <property type="match status" value="1"/>
</dbReference>
<dbReference type="HAMAP" id="MF_01849">
    <property type="entry name" value="RNA_methyltr_RlmN"/>
    <property type="match status" value="1"/>
</dbReference>
<dbReference type="InterPro" id="IPR013785">
    <property type="entry name" value="Aldolase_TIM"/>
</dbReference>
<dbReference type="InterPro" id="IPR040072">
    <property type="entry name" value="Methyltransferase_A"/>
</dbReference>
<dbReference type="InterPro" id="IPR048641">
    <property type="entry name" value="RlmN_N"/>
</dbReference>
<dbReference type="InterPro" id="IPR027492">
    <property type="entry name" value="RNA_MTrfase_RlmN"/>
</dbReference>
<dbReference type="InterPro" id="IPR004383">
    <property type="entry name" value="rRNA_lsu_MTrfase_RlmN/Cfr"/>
</dbReference>
<dbReference type="InterPro" id="IPR007197">
    <property type="entry name" value="rSAM"/>
</dbReference>
<dbReference type="NCBIfam" id="TIGR00048">
    <property type="entry name" value="rRNA_mod_RlmN"/>
    <property type="match status" value="1"/>
</dbReference>
<dbReference type="PANTHER" id="PTHR30544">
    <property type="entry name" value="23S RRNA METHYLTRANSFERASE"/>
    <property type="match status" value="1"/>
</dbReference>
<dbReference type="PANTHER" id="PTHR30544:SF5">
    <property type="entry name" value="RADICAL SAM CORE DOMAIN-CONTAINING PROTEIN"/>
    <property type="match status" value="1"/>
</dbReference>
<dbReference type="Pfam" id="PF04055">
    <property type="entry name" value="Radical_SAM"/>
    <property type="match status" value="1"/>
</dbReference>
<dbReference type="Pfam" id="PF21016">
    <property type="entry name" value="RlmN_N"/>
    <property type="match status" value="1"/>
</dbReference>
<dbReference type="PIRSF" id="PIRSF006004">
    <property type="entry name" value="CHP00048"/>
    <property type="match status" value="1"/>
</dbReference>
<dbReference type="SFLD" id="SFLDF00275">
    <property type="entry name" value="adenosine_C2_methyltransferase"/>
    <property type="match status" value="1"/>
</dbReference>
<dbReference type="SFLD" id="SFLDS00029">
    <property type="entry name" value="Radical_SAM"/>
    <property type="match status" value="1"/>
</dbReference>
<dbReference type="SUPFAM" id="SSF102114">
    <property type="entry name" value="Radical SAM enzymes"/>
    <property type="match status" value="1"/>
</dbReference>
<dbReference type="PROSITE" id="PS51918">
    <property type="entry name" value="RADICAL_SAM"/>
    <property type="match status" value="1"/>
</dbReference>
<organism>
    <name type="scientific">Nitratidesulfovibrio vulgaris (strain DP4)</name>
    <name type="common">Desulfovibrio vulgaris</name>
    <dbReference type="NCBI Taxonomy" id="391774"/>
    <lineage>
        <taxon>Bacteria</taxon>
        <taxon>Pseudomonadati</taxon>
        <taxon>Thermodesulfobacteriota</taxon>
        <taxon>Desulfovibrionia</taxon>
        <taxon>Desulfovibrionales</taxon>
        <taxon>Desulfovibrionaceae</taxon>
        <taxon>Nitratidesulfovibrio</taxon>
    </lineage>
</organism>
<name>RLMN_NITV4</name>
<reference key="1">
    <citation type="journal article" date="2009" name="Environ. Microbiol.">
        <title>Contribution of mobile genetic elements to Desulfovibrio vulgaris genome plasticity.</title>
        <authorList>
            <person name="Walker C.B."/>
            <person name="Stolyar S."/>
            <person name="Chivian D."/>
            <person name="Pinel N."/>
            <person name="Gabster J.A."/>
            <person name="Dehal P.S."/>
            <person name="He Z."/>
            <person name="Yang Z.K."/>
            <person name="Yen H.C."/>
            <person name="Zhou J."/>
            <person name="Wall J.D."/>
            <person name="Hazen T.C."/>
            <person name="Arkin A.P."/>
            <person name="Stahl D.A."/>
        </authorList>
    </citation>
    <scope>NUCLEOTIDE SEQUENCE [LARGE SCALE GENOMIC DNA]</scope>
    <source>
        <strain>DP4</strain>
    </source>
</reference>
<gene>
    <name evidence="1" type="primary">rlmN</name>
    <name type="ordered locus">Dvul_0461</name>
</gene>
<sequence length="364" mass="40515">MTDILNLTYEELEAFMTAELGEPRFRARQVWQWLWQKCARSFDEMTNVSKATRARLAEKAVITWPEVETVQKSADGTTKFLLRLADGALVETVLIPSASREGTLRITQCLSCQVGCAMGCTFCSTGTMGFERNMTMGEILGQVLVARAHLGDSRPDHPILRNLVFMGMGEPLLNLNEVMRSLRTLNDEFGLSFSPRRITVSTCGIEKGLRELGESGLAFLAVSLHAPNQEIRKRIMPKAAHWHLDDLITALESYPLKTRERVTFEYLLLGGVNDGIEHARELVRLVSRTKGKLNLIVYNPAEGDPYDAPTPERILAFEQYLWSKNITAIIRKSKGQDIKAACGQLKASELQRGTASAGADAPED</sequence>
<protein>
    <recommendedName>
        <fullName evidence="1">Dual-specificity RNA methyltransferase RlmN</fullName>
        <ecNumber evidence="1">2.1.1.192</ecNumber>
    </recommendedName>
    <alternativeName>
        <fullName evidence="1">23S rRNA (adenine(2503)-C(2))-methyltransferase</fullName>
    </alternativeName>
    <alternativeName>
        <fullName evidence="1">23S rRNA m2A2503 methyltransferase</fullName>
    </alternativeName>
    <alternativeName>
        <fullName evidence="1">Ribosomal RNA large subunit methyltransferase N</fullName>
    </alternativeName>
    <alternativeName>
        <fullName evidence="1">tRNA (adenine(37)-C(2))-methyltransferase</fullName>
    </alternativeName>
    <alternativeName>
        <fullName evidence="1">tRNA m2A37 methyltransferase</fullName>
    </alternativeName>
</protein>
<comment type="function">
    <text evidence="1">Specifically methylates position 2 of adenine 2503 in 23S rRNA and position 2 of adenine 37 in tRNAs. m2A2503 modification seems to play a crucial role in the proofreading step occurring at the peptidyl transferase center and thus would serve to optimize ribosomal fidelity.</text>
</comment>
<comment type="catalytic activity">
    <reaction evidence="1">
        <text>adenosine(2503) in 23S rRNA + 2 reduced [2Fe-2S]-[ferredoxin] + 2 S-adenosyl-L-methionine = 2-methyladenosine(2503) in 23S rRNA + 5'-deoxyadenosine + L-methionine + 2 oxidized [2Fe-2S]-[ferredoxin] + S-adenosyl-L-homocysteine</text>
        <dbReference type="Rhea" id="RHEA:42916"/>
        <dbReference type="Rhea" id="RHEA-COMP:10000"/>
        <dbReference type="Rhea" id="RHEA-COMP:10001"/>
        <dbReference type="Rhea" id="RHEA-COMP:10152"/>
        <dbReference type="Rhea" id="RHEA-COMP:10282"/>
        <dbReference type="ChEBI" id="CHEBI:17319"/>
        <dbReference type="ChEBI" id="CHEBI:33737"/>
        <dbReference type="ChEBI" id="CHEBI:33738"/>
        <dbReference type="ChEBI" id="CHEBI:57844"/>
        <dbReference type="ChEBI" id="CHEBI:57856"/>
        <dbReference type="ChEBI" id="CHEBI:59789"/>
        <dbReference type="ChEBI" id="CHEBI:74411"/>
        <dbReference type="ChEBI" id="CHEBI:74497"/>
        <dbReference type="EC" id="2.1.1.192"/>
    </reaction>
</comment>
<comment type="catalytic activity">
    <reaction evidence="1">
        <text>adenosine(37) in tRNA + 2 reduced [2Fe-2S]-[ferredoxin] + 2 S-adenosyl-L-methionine = 2-methyladenosine(37) in tRNA + 5'-deoxyadenosine + L-methionine + 2 oxidized [2Fe-2S]-[ferredoxin] + S-adenosyl-L-homocysteine</text>
        <dbReference type="Rhea" id="RHEA:43332"/>
        <dbReference type="Rhea" id="RHEA-COMP:10000"/>
        <dbReference type="Rhea" id="RHEA-COMP:10001"/>
        <dbReference type="Rhea" id="RHEA-COMP:10162"/>
        <dbReference type="Rhea" id="RHEA-COMP:10485"/>
        <dbReference type="ChEBI" id="CHEBI:17319"/>
        <dbReference type="ChEBI" id="CHEBI:33737"/>
        <dbReference type="ChEBI" id="CHEBI:33738"/>
        <dbReference type="ChEBI" id="CHEBI:57844"/>
        <dbReference type="ChEBI" id="CHEBI:57856"/>
        <dbReference type="ChEBI" id="CHEBI:59789"/>
        <dbReference type="ChEBI" id="CHEBI:74411"/>
        <dbReference type="ChEBI" id="CHEBI:74497"/>
        <dbReference type="EC" id="2.1.1.192"/>
    </reaction>
</comment>
<comment type="cofactor">
    <cofactor evidence="1">
        <name>[4Fe-4S] cluster</name>
        <dbReference type="ChEBI" id="CHEBI:49883"/>
    </cofactor>
    <text evidence="1">Binds 1 [4Fe-4S] cluster. The cluster is coordinated with 3 cysteines and an exchangeable S-adenosyl-L-methionine.</text>
</comment>
<comment type="subcellular location">
    <subcellularLocation>
        <location evidence="1">Cytoplasm</location>
    </subcellularLocation>
</comment>
<comment type="miscellaneous">
    <text evidence="1">Reaction proceeds by a ping-pong mechanism involving intermediate methylation of a conserved cysteine residue.</text>
</comment>
<comment type="similarity">
    <text evidence="1">Belongs to the radical SAM superfamily. RlmN family.</text>
</comment>
<keyword id="KW-0004">4Fe-4S</keyword>
<keyword id="KW-0963">Cytoplasm</keyword>
<keyword id="KW-1015">Disulfide bond</keyword>
<keyword id="KW-0408">Iron</keyword>
<keyword id="KW-0411">Iron-sulfur</keyword>
<keyword id="KW-0479">Metal-binding</keyword>
<keyword id="KW-0489">Methyltransferase</keyword>
<keyword id="KW-0698">rRNA processing</keyword>
<keyword id="KW-0949">S-adenosyl-L-methionine</keyword>
<keyword id="KW-0808">Transferase</keyword>
<keyword id="KW-0819">tRNA processing</keyword>
<feature type="chain" id="PRO_0000350156" description="Dual-specificity RNA methyltransferase RlmN">
    <location>
        <begin position="1"/>
        <end position="364"/>
    </location>
</feature>
<feature type="domain" description="Radical SAM core" evidence="2">
    <location>
        <begin position="102"/>
        <end position="337"/>
    </location>
</feature>
<feature type="active site" description="Proton acceptor" evidence="1">
    <location>
        <position position="91"/>
    </location>
</feature>
<feature type="active site" description="S-methylcysteine intermediate" evidence="1">
    <location>
        <position position="342"/>
    </location>
</feature>
<feature type="binding site" evidence="1">
    <location>
        <position position="116"/>
    </location>
    <ligand>
        <name>[4Fe-4S] cluster</name>
        <dbReference type="ChEBI" id="CHEBI:49883"/>
        <note>4Fe-4S-S-AdoMet</note>
    </ligand>
</feature>
<feature type="binding site" evidence="1">
    <location>
        <position position="120"/>
    </location>
    <ligand>
        <name>[4Fe-4S] cluster</name>
        <dbReference type="ChEBI" id="CHEBI:49883"/>
        <note>4Fe-4S-S-AdoMet</note>
    </ligand>
</feature>
<feature type="binding site" evidence="1">
    <location>
        <position position="123"/>
    </location>
    <ligand>
        <name>[4Fe-4S] cluster</name>
        <dbReference type="ChEBI" id="CHEBI:49883"/>
        <note>4Fe-4S-S-AdoMet</note>
    </ligand>
</feature>
<feature type="binding site" evidence="1">
    <location>
        <begin position="169"/>
        <end position="170"/>
    </location>
    <ligand>
        <name>S-adenosyl-L-methionine</name>
        <dbReference type="ChEBI" id="CHEBI:59789"/>
    </ligand>
</feature>
<feature type="binding site" evidence="1">
    <location>
        <position position="201"/>
    </location>
    <ligand>
        <name>S-adenosyl-L-methionine</name>
        <dbReference type="ChEBI" id="CHEBI:59789"/>
    </ligand>
</feature>
<feature type="binding site" evidence="1">
    <location>
        <begin position="223"/>
        <end position="225"/>
    </location>
    <ligand>
        <name>S-adenosyl-L-methionine</name>
        <dbReference type="ChEBI" id="CHEBI:59789"/>
    </ligand>
</feature>
<feature type="binding site" evidence="1">
    <location>
        <position position="299"/>
    </location>
    <ligand>
        <name>S-adenosyl-L-methionine</name>
        <dbReference type="ChEBI" id="CHEBI:59789"/>
    </ligand>
</feature>
<feature type="disulfide bond" description="(transient)" evidence="1">
    <location>
        <begin position="109"/>
        <end position="342"/>
    </location>
</feature>